<feature type="chain" id="PRO_0000393261" description="Probable methyltransferase PMT21">
    <location>
        <begin position="1"/>
        <end position="600"/>
    </location>
</feature>
<feature type="topological domain" description="Cytoplasmic" evidence="1">
    <location>
        <begin position="1"/>
        <end position="16"/>
    </location>
</feature>
<feature type="transmembrane region" description="Helical; Signal-anchor for type II membrane protein" evidence="1">
    <location>
        <begin position="17"/>
        <end position="37"/>
    </location>
</feature>
<feature type="topological domain" description="Lumenal" evidence="1">
    <location>
        <begin position="38"/>
        <end position="600"/>
    </location>
</feature>
<feature type="glycosylation site" description="N-linked (GlcNAc...) asparagine" evidence="1">
    <location>
        <position position="594"/>
    </location>
</feature>
<comment type="subcellular location">
    <subcellularLocation>
        <location evidence="3">Endoplasmic reticulum membrane</location>
        <topology evidence="3">Single-pass type II membrane protein</topology>
    </subcellularLocation>
</comment>
<comment type="induction">
    <text evidence="2">By dehydration stress.</text>
</comment>
<comment type="similarity">
    <text evidence="3">Belongs to the methyltransferase superfamily.</text>
</comment>
<comment type="sequence caution" evidence="3">
    <conflict type="erroneous gene model prediction">
        <sequence resource="EMBL-CDS" id="CAA16701"/>
    </conflict>
</comment>
<comment type="sequence caution" evidence="3">
    <conflict type="erroneous gene model prediction">
        <sequence resource="EMBL-CDS" id="CAB78914"/>
    </conflict>
</comment>
<sequence length="600" mass="68331">MKYKDEKYEKAEKGSRILPKTVLLILLCGLSFYLGGLYCGKNIIEVSDVAKAESSSLDVDDSLQVKSVSFSECSSDYQDYTPCTDPRKWKKYGTHRLTFMERHCPPVFDRKQCLVPPPDGYKPPIRWPKSKDECWYRNVPYDWINKQKSNQNWLRKEGEKFIFPGGGTMFPHGVSAYVDLMQDLIPEMKDGTIRTAIDTGCGVASWGGDLLDRGILTVSLAPRDNHEAQVQFALERGIPAILGIISTQRLPFPSNSFDMAHCSRCLIPWTEFGGVYLLEVHRILRPGGFWVLSGPPVNYENRWKGWDTTIEEQRSNYEKLQELLSSMCFKMYAKKDDIAVWQKSPDNLCYNKLSNDPDAYPPKCDDSLEPDSAWYTPLRPCVVVPSPKLKKTDLESTPKWPERLHTTPERISDVPGGNGNVFKHDDSKWKTRAKHYKKLLPAIGSDKIRNVMDMNTAYGGLAAALVNDPLWVMNVVSSYAANTLPVVFDRGLIGTYHDWCEAFSTYPRTYDLLHVDGLFTSESQRCDMKYVMLEMDRILRPSGYAIIRESSYFADSIASVAKELRWSCRKEQTESASANEKLLICQKKLWYSSNASSETN</sequence>
<protein>
    <recommendedName>
        <fullName>Probable methyltransferase PMT21</fullName>
        <ecNumber>2.1.1.-</ecNumber>
    </recommendedName>
    <alternativeName>
        <fullName>Protein EARLY-RESPONSIVE TO DEHYDRATION 3</fullName>
    </alternativeName>
</protein>
<keyword id="KW-0256">Endoplasmic reticulum</keyword>
<keyword id="KW-0325">Glycoprotein</keyword>
<keyword id="KW-0472">Membrane</keyword>
<keyword id="KW-0489">Methyltransferase</keyword>
<keyword id="KW-1185">Reference proteome</keyword>
<keyword id="KW-0735">Signal-anchor</keyword>
<keyword id="KW-0808">Transferase</keyword>
<keyword id="KW-0812">Transmembrane</keyword>
<keyword id="KW-1133">Transmembrane helix</keyword>
<evidence type="ECO:0000255" key="1"/>
<evidence type="ECO:0000269" key="2">
    <source>
    </source>
</evidence>
<evidence type="ECO:0000305" key="3"/>
<proteinExistence type="evidence at transcript level"/>
<organism>
    <name type="scientific">Arabidopsis thaliana</name>
    <name type="common">Mouse-ear cress</name>
    <dbReference type="NCBI Taxonomy" id="3702"/>
    <lineage>
        <taxon>Eukaryota</taxon>
        <taxon>Viridiplantae</taxon>
        <taxon>Streptophyta</taxon>
        <taxon>Embryophyta</taxon>
        <taxon>Tracheophyta</taxon>
        <taxon>Spermatophyta</taxon>
        <taxon>Magnoliopsida</taxon>
        <taxon>eudicotyledons</taxon>
        <taxon>Gunneridae</taxon>
        <taxon>Pentapetalae</taxon>
        <taxon>rosids</taxon>
        <taxon>malvids</taxon>
        <taxon>Brassicales</taxon>
        <taxon>Brassicaceae</taxon>
        <taxon>Camelineae</taxon>
        <taxon>Arabidopsis</taxon>
    </lineage>
</organism>
<accession>Q94II3</accession>
<accession>O49670</accession>
<reference key="1">
    <citation type="journal article" date="1994" name="Plant Mol. Biol.">
        <title>Cloning of cDNAs for genes that are early-responsive to dehydration stress (ERDs) in Arabidopsis thaliana L.: identification of three ERDs as HSP cognate genes.</title>
        <authorList>
            <person name="Kiyosue T."/>
            <person name="Yamaguchi-shinozaki K."/>
            <person name="Shinozaki K."/>
        </authorList>
    </citation>
    <scope>NUCLEOTIDE SEQUENCE [MRNA]</scope>
    <scope>INDUCTION</scope>
    <source>
        <strain>cv. Columbia</strain>
    </source>
</reference>
<reference key="2">
    <citation type="journal article" date="1999" name="Nature">
        <title>Sequence and analysis of chromosome 4 of the plant Arabidopsis thaliana.</title>
        <authorList>
            <person name="Mayer K.F.X."/>
            <person name="Schueller C."/>
            <person name="Wambutt R."/>
            <person name="Murphy G."/>
            <person name="Volckaert G."/>
            <person name="Pohl T."/>
            <person name="Duesterhoeft A."/>
            <person name="Stiekema W."/>
            <person name="Entian K.-D."/>
            <person name="Terryn N."/>
            <person name="Harris B."/>
            <person name="Ansorge W."/>
            <person name="Brandt P."/>
            <person name="Grivell L.A."/>
            <person name="Rieger M."/>
            <person name="Weichselgartner M."/>
            <person name="de Simone V."/>
            <person name="Obermaier B."/>
            <person name="Mache R."/>
            <person name="Mueller M."/>
            <person name="Kreis M."/>
            <person name="Delseny M."/>
            <person name="Puigdomenech P."/>
            <person name="Watson M."/>
            <person name="Schmidtheini T."/>
            <person name="Reichert B."/>
            <person name="Portetelle D."/>
            <person name="Perez-Alonso M."/>
            <person name="Boutry M."/>
            <person name="Bancroft I."/>
            <person name="Vos P."/>
            <person name="Hoheisel J."/>
            <person name="Zimmermann W."/>
            <person name="Wedler H."/>
            <person name="Ridley P."/>
            <person name="Langham S.-A."/>
            <person name="McCullagh B."/>
            <person name="Bilham L."/>
            <person name="Robben J."/>
            <person name="van der Schueren J."/>
            <person name="Grymonprez B."/>
            <person name="Chuang Y.-J."/>
            <person name="Vandenbussche F."/>
            <person name="Braeken M."/>
            <person name="Weltjens I."/>
            <person name="Voet M."/>
            <person name="Bastiaens I."/>
            <person name="Aert R."/>
            <person name="Defoor E."/>
            <person name="Weitzenegger T."/>
            <person name="Bothe G."/>
            <person name="Ramsperger U."/>
            <person name="Hilbert H."/>
            <person name="Braun M."/>
            <person name="Holzer E."/>
            <person name="Brandt A."/>
            <person name="Peters S."/>
            <person name="van Staveren M."/>
            <person name="Dirkse W."/>
            <person name="Mooijman P."/>
            <person name="Klein Lankhorst R."/>
            <person name="Rose M."/>
            <person name="Hauf J."/>
            <person name="Koetter P."/>
            <person name="Berneiser S."/>
            <person name="Hempel S."/>
            <person name="Feldpausch M."/>
            <person name="Lamberth S."/>
            <person name="Van den Daele H."/>
            <person name="De Keyser A."/>
            <person name="Buysshaert C."/>
            <person name="Gielen J."/>
            <person name="Villarroel R."/>
            <person name="De Clercq R."/>
            <person name="van Montagu M."/>
            <person name="Rogers J."/>
            <person name="Cronin A."/>
            <person name="Quail M.A."/>
            <person name="Bray-Allen S."/>
            <person name="Clark L."/>
            <person name="Doggett J."/>
            <person name="Hall S."/>
            <person name="Kay M."/>
            <person name="Lennard N."/>
            <person name="McLay K."/>
            <person name="Mayes R."/>
            <person name="Pettett A."/>
            <person name="Rajandream M.A."/>
            <person name="Lyne M."/>
            <person name="Benes V."/>
            <person name="Rechmann S."/>
            <person name="Borkova D."/>
            <person name="Bloecker H."/>
            <person name="Scharfe M."/>
            <person name="Grimm M."/>
            <person name="Loehnert T.-H."/>
            <person name="Dose S."/>
            <person name="de Haan M."/>
            <person name="Maarse A.C."/>
            <person name="Schaefer M."/>
            <person name="Mueller-Auer S."/>
            <person name="Gabel C."/>
            <person name="Fuchs M."/>
            <person name="Fartmann B."/>
            <person name="Granderath K."/>
            <person name="Dauner D."/>
            <person name="Herzl A."/>
            <person name="Neumann S."/>
            <person name="Argiriou A."/>
            <person name="Vitale D."/>
            <person name="Liguori R."/>
            <person name="Piravandi E."/>
            <person name="Massenet O."/>
            <person name="Quigley F."/>
            <person name="Clabauld G."/>
            <person name="Muendlein A."/>
            <person name="Felber R."/>
            <person name="Schnabl S."/>
            <person name="Hiller R."/>
            <person name="Schmidt W."/>
            <person name="Lecharny A."/>
            <person name="Aubourg S."/>
            <person name="Chefdor F."/>
            <person name="Cooke R."/>
            <person name="Berger C."/>
            <person name="Monfort A."/>
            <person name="Casacuberta E."/>
            <person name="Gibbons T."/>
            <person name="Weber N."/>
            <person name="Vandenbol M."/>
            <person name="Bargues M."/>
            <person name="Terol J."/>
            <person name="Torres A."/>
            <person name="Perez-Perez A."/>
            <person name="Purnelle B."/>
            <person name="Bent E."/>
            <person name="Johnson S."/>
            <person name="Tacon D."/>
            <person name="Jesse T."/>
            <person name="Heijnen L."/>
            <person name="Schwarz S."/>
            <person name="Scholler P."/>
            <person name="Heber S."/>
            <person name="Francs P."/>
            <person name="Bielke C."/>
            <person name="Frishman D."/>
            <person name="Haase D."/>
            <person name="Lemcke K."/>
            <person name="Mewes H.-W."/>
            <person name="Stocker S."/>
            <person name="Zaccaria P."/>
            <person name="Bevan M."/>
            <person name="Wilson R.K."/>
            <person name="de la Bastide M."/>
            <person name="Habermann K."/>
            <person name="Parnell L."/>
            <person name="Dedhia N."/>
            <person name="Gnoj L."/>
            <person name="Schutz K."/>
            <person name="Huang E."/>
            <person name="Spiegel L."/>
            <person name="Sekhon M."/>
            <person name="Murray J."/>
            <person name="Sheet P."/>
            <person name="Cordes M."/>
            <person name="Abu-Threideh J."/>
            <person name="Stoneking T."/>
            <person name="Kalicki J."/>
            <person name="Graves T."/>
            <person name="Harmon G."/>
            <person name="Edwards J."/>
            <person name="Latreille P."/>
            <person name="Courtney L."/>
            <person name="Cloud J."/>
            <person name="Abbott A."/>
            <person name="Scott K."/>
            <person name="Johnson D."/>
            <person name="Minx P."/>
            <person name="Bentley D."/>
            <person name="Fulton B."/>
            <person name="Miller N."/>
            <person name="Greco T."/>
            <person name="Kemp K."/>
            <person name="Kramer J."/>
            <person name="Fulton L."/>
            <person name="Mardis E."/>
            <person name="Dante M."/>
            <person name="Pepin K."/>
            <person name="Hillier L.W."/>
            <person name="Nelson J."/>
            <person name="Spieth J."/>
            <person name="Ryan E."/>
            <person name="Andrews S."/>
            <person name="Geisel C."/>
            <person name="Layman D."/>
            <person name="Du H."/>
            <person name="Ali J."/>
            <person name="Berghoff A."/>
            <person name="Jones K."/>
            <person name="Drone K."/>
            <person name="Cotton M."/>
            <person name="Joshu C."/>
            <person name="Antonoiu B."/>
            <person name="Zidanic M."/>
            <person name="Strong C."/>
            <person name="Sun H."/>
            <person name="Lamar B."/>
            <person name="Yordan C."/>
            <person name="Ma P."/>
            <person name="Zhong J."/>
            <person name="Preston R."/>
            <person name="Vil D."/>
            <person name="Shekher M."/>
            <person name="Matero A."/>
            <person name="Shah R."/>
            <person name="Swaby I.K."/>
            <person name="O'Shaughnessy A."/>
            <person name="Rodriguez M."/>
            <person name="Hoffman J."/>
            <person name="Till S."/>
            <person name="Granat S."/>
            <person name="Shohdy N."/>
            <person name="Hasegawa A."/>
            <person name="Hameed A."/>
            <person name="Lodhi M."/>
            <person name="Johnson A."/>
            <person name="Chen E."/>
            <person name="Marra M.A."/>
            <person name="Martienssen R."/>
            <person name="McCombie W.R."/>
        </authorList>
    </citation>
    <scope>NUCLEOTIDE SEQUENCE [LARGE SCALE GENOMIC DNA]</scope>
    <source>
        <strain>cv. Columbia</strain>
    </source>
</reference>
<reference key="3">
    <citation type="journal article" date="2017" name="Plant J.">
        <title>Araport11: a complete reannotation of the Arabidopsis thaliana reference genome.</title>
        <authorList>
            <person name="Cheng C.Y."/>
            <person name="Krishnakumar V."/>
            <person name="Chan A.P."/>
            <person name="Thibaud-Nissen F."/>
            <person name="Schobel S."/>
            <person name="Town C.D."/>
        </authorList>
    </citation>
    <scope>GENOME REANNOTATION</scope>
    <source>
        <strain>cv. Columbia</strain>
    </source>
</reference>
<reference key="4">
    <citation type="journal article" date="2009" name="DNA Res.">
        <title>Analysis of multiple occurrences of alternative splicing events in Arabidopsis thaliana using novel sequenced full-length cDNAs.</title>
        <authorList>
            <person name="Iida K."/>
            <person name="Fukami-Kobayashi K."/>
            <person name="Toyoda A."/>
            <person name="Sakaki Y."/>
            <person name="Kobayashi M."/>
            <person name="Seki M."/>
            <person name="Shinozaki K."/>
        </authorList>
    </citation>
    <scope>NUCLEOTIDE SEQUENCE [LARGE SCALE MRNA]</scope>
    <source>
        <tissue>Rosette leaf</tissue>
    </source>
</reference>
<reference key="5">
    <citation type="journal article" date="2007" name="Plant J.">
        <title>The TUMOROUS SHOOT DEVELOPMENT2 gene of Arabidopsis encoding a putative methyltransferase is required for cell adhesion and co-ordinated plant development.</title>
        <authorList>
            <person name="Krupkova E."/>
            <person name="Immerzeel P."/>
            <person name="Pauly M."/>
            <person name="Schmulling T."/>
        </authorList>
    </citation>
    <scope>GENE FAMILY</scope>
</reference>
<gene>
    <name type="primary">ERD3</name>
    <name type="ordered locus">At4g19120</name>
    <name type="ORF">T18B16.90</name>
</gene>
<dbReference type="EC" id="2.1.1.-"/>
<dbReference type="EMBL" id="AB039927">
    <property type="protein sequence ID" value="BAB63914.1"/>
    <property type="molecule type" value="mRNA"/>
</dbReference>
<dbReference type="EMBL" id="AL021687">
    <property type="protein sequence ID" value="CAA16701.1"/>
    <property type="status" value="ALT_SEQ"/>
    <property type="molecule type" value="Genomic_DNA"/>
</dbReference>
<dbReference type="EMBL" id="AL161550">
    <property type="protein sequence ID" value="CAB78914.1"/>
    <property type="status" value="ALT_SEQ"/>
    <property type="molecule type" value="Genomic_DNA"/>
</dbReference>
<dbReference type="EMBL" id="CP002687">
    <property type="protein sequence ID" value="AEE84145.1"/>
    <property type="molecule type" value="Genomic_DNA"/>
</dbReference>
<dbReference type="EMBL" id="CP002687">
    <property type="protein sequence ID" value="AEE84146.1"/>
    <property type="molecule type" value="Genomic_DNA"/>
</dbReference>
<dbReference type="EMBL" id="AK317548">
    <property type="protein sequence ID" value="BAH20212.1"/>
    <property type="molecule type" value="mRNA"/>
</dbReference>
<dbReference type="EMBL" id="AK317670">
    <property type="protein sequence ID" value="BAH20330.1"/>
    <property type="molecule type" value="mRNA"/>
</dbReference>
<dbReference type="PIR" id="A85216">
    <property type="entry name" value="A85216"/>
</dbReference>
<dbReference type="PIR" id="T04433">
    <property type="entry name" value="T04433"/>
</dbReference>
<dbReference type="RefSeq" id="NP_567575.1">
    <property type="nucleotide sequence ID" value="NM_118031.4"/>
</dbReference>
<dbReference type="RefSeq" id="NP_849408.1">
    <property type="nucleotide sequence ID" value="NM_179077.2"/>
</dbReference>
<dbReference type="FunCoup" id="Q94II3">
    <property type="interactions" value="88"/>
</dbReference>
<dbReference type="STRING" id="3702.Q94II3"/>
<dbReference type="GlyCosmos" id="Q94II3">
    <property type="glycosylation" value="1 site, No reported glycans"/>
</dbReference>
<dbReference type="GlyGen" id="Q94II3">
    <property type="glycosylation" value="1 site"/>
</dbReference>
<dbReference type="PaxDb" id="3702-AT4G19120.1"/>
<dbReference type="ProteomicsDB" id="234690"/>
<dbReference type="EnsemblPlants" id="AT4G19120.1">
    <property type="protein sequence ID" value="AT4G19120.1"/>
    <property type="gene ID" value="AT4G19120"/>
</dbReference>
<dbReference type="EnsemblPlants" id="AT4G19120.2">
    <property type="protein sequence ID" value="AT4G19120.2"/>
    <property type="gene ID" value="AT4G19120"/>
</dbReference>
<dbReference type="GeneID" id="827650"/>
<dbReference type="Gramene" id="AT4G19120.1">
    <property type="protein sequence ID" value="AT4G19120.1"/>
    <property type="gene ID" value="AT4G19120"/>
</dbReference>
<dbReference type="Gramene" id="AT4G19120.2">
    <property type="protein sequence ID" value="AT4G19120.2"/>
    <property type="gene ID" value="AT4G19120"/>
</dbReference>
<dbReference type="KEGG" id="ath:AT4G19120"/>
<dbReference type="Araport" id="AT4G19120"/>
<dbReference type="TAIR" id="AT4G19120">
    <property type="gene designation" value="ERD3"/>
</dbReference>
<dbReference type="eggNOG" id="ENOG502QQA9">
    <property type="taxonomic scope" value="Eukaryota"/>
</dbReference>
<dbReference type="HOGENOM" id="CLU_010485_2_2_1"/>
<dbReference type="InParanoid" id="Q94II3"/>
<dbReference type="OMA" id="CDMKYVM"/>
<dbReference type="PhylomeDB" id="Q94II3"/>
<dbReference type="CD-CODE" id="4299E36E">
    <property type="entry name" value="Nucleolus"/>
</dbReference>
<dbReference type="PRO" id="PR:Q94II3"/>
<dbReference type="Proteomes" id="UP000006548">
    <property type="component" value="Chromosome 4"/>
</dbReference>
<dbReference type="ExpressionAtlas" id="Q94II3">
    <property type="expression patterns" value="baseline and differential"/>
</dbReference>
<dbReference type="GO" id="GO:0005789">
    <property type="term" value="C:endoplasmic reticulum membrane"/>
    <property type="evidence" value="ECO:0007669"/>
    <property type="project" value="UniProtKB-SubCell"/>
</dbReference>
<dbReference type="GO" id="GO:0005768">
    <property type="term" value="C:endosome"/>
    <property type="evidence" value="ECO:0007005"/>
    <property type="project" value="TAIR"/>
</dbReference>
<dbReference type="GO" id="GO:0005794">
    <property type="term" value="C:Golgi apparatus"/>
    <property type="evidence" value="ECO:0007005"/>
    <property type="project" value="TAIR"/>
</dbReference>
<dbReference type="GO" id="GO:0000138">
    <property type="term" value="C:Golgi trans cisterna"/>
    <property type="evidence" value="ECO:0007005"/>
    <property type="project" value="TAIR"/>
</dbReference>
<dbReference type="GO" id="GO:0005802">
    <property type="term" value="C:trans-Golgi network"/>
    <property type="evidence" value="ECO:0007005"/>
    <property type="project" value="TAIR"/>
</dbReference>
<dbReference type="GO" id="GO:0008168">
    <property type="term" value="F:methyltransferase activity"/>
    <property type="evidence" value="ECO:0007669"/>
    <property type="project" value="UniProtKB-KW"/>
</dbReference>
<dbReference type="GO" id="GO:0032259">
    <property type="term" value="P:methylation"/>
    <property type="evidence" value="ECO:0007669"/>
    <property type="project" value="UniProtKB-KW"/>
</dbReference>
<dbReference type="FunFam" id="3.40.50.150:FF:000076">
    <property type="entry name" value="probable methyltransferase PMT21"/>
    <property type="match status" value="1"/>
</dbReference>
<dbReference type="Gene3D" id="3.40.50.150">
    <property type="entry name" value="Vaccinia Virus protein VP39"/>
    <property type="match status" value="1"/>
</dbReference>
<dbReference type="InterPro" id="IPR004159">
    <property type="entry name" value="Put_SAM_MeTrfase"/>
</dbReference>
<dbReference type="InterPro" id="IPR029063">
    <property type="entry name" value="SAM-dependent_MTases_sf"/>
</dbReference>
<dbReference type="PANTHER" id="PTHR10108:SF984">
    <property type="entry name" value="METHYLTRANSFERASE PMT21-RELATED"/>
    <property type="match status" value="1"/>
</dbReference>
<dbReference type="PANTHER" id="PTHR10108">
    <property type="entry name" value="SAM-DEPENDENT METHYLTRANSFERASE"/>
    <property type="match status" value="1"/>
</dbReference>
<dbReference type="Pfam" id="PF03141">
    <property type="entry name" value="Methyltransf_29"/>
    <property type="match status" value="1"/>
</dbReference>
<dbReference type="SUPFAM" id="SSF53335">
    <property type="entry name" value="S-adenosyl-L-methionine-dependent methyltransferases"/>
    <property type="match status" value="2"/>
</dbReference>
<name>PMTL_ARATH</name>